<proteinExistence type="inferred from homology"/>
<protein>
    <recommendedName>
        <fullName evidence="1">Threonylcarbamoyl-AMP synthase</fullName>
        <shortName evidence="1">TC-AMP synthase</shortName>
        <ecNumber evidence="1">2.7.7.87</ecNumber>
    </recommendedName>
    <alternativeName>
        <fullName evidence="1">L-threonylcarbamoyladenylate synthase</fullName>
    </alternativeName>
    <alternativeName>
        <fullName evidence="1">t(6)A37 threonylcarbamoyladenosine biosynthesis protein TsaC</fullName>
    </alternativeName>
    <alternativeName>
        <fullName evidence="1">tRNA threonylcarbamoyladenosine biosynthesis protein TsaC</fullName>
    </alternativeName>
</protein>
<feature type="chain" id="PRO_0000353000" description="Threonylcarbamoyl-AMP synthase">
    <location>
        <begin position="1"/>
        <end position="186"/>
    </location>
</feature>
<feature type="domain" description="YrdC-like" evidence="1">
    <location>
        <begin position="5"/>
        <end position="186"/>
    </location>
</feature>
<gene>
    <name evidence="1" type="primary">tsaC</name>
    <name type="synonym">rimN</name>
    <name type="ordered locus">Tcr_0019</name>
</gene>
<comment type="function">
    <text evidence="1">Required for the formation of a threonylcarbamoyl group on adenosine at position 37 (t(6)A37) in tRNAs that read codons beginning with adenine. Catalyzes the conversion of L-threonine, HCO(3)(-)/CO(2) and ATP to give threonylcarbamoyl-AMP (TC-AMP) as the acyladenylate intermediate, with the release of diphosphate.</text>
</comment>
<comment type="catalytic activity">
    <reaction evidence="1">
        <text>L-threonine + hydrogencarbonate + ATP = L-threonylcarbamoyladenylate + diphosphate + H2O</text>
        <dbReference type="Rhea" id="RHEA:36407"/>
        <dbReference type="ChEBI" id="CHEBI:15377"/>
        <dbReference type="ChEBI" id="CHEBI:17544"/>
        <dbReference type="ChEBI" id="CHEBI:30616"/>
        <dbReference type="ChEBI" id="CHEBI:33019"/>
        <dbReference type="ChEBI" id="CHEBI:57926"/>
        <dbReference type="ChEBI" id="CHEBI:73682"/>
        <dbReference type="EC" id="2.7.7.87"/>
    </reaction>
</comment>
<comment type="subcellular location">
    <subcellularLocation>
        <location evidence="1">Cytoplasm</location>
    </subcellularLocation>
</comment>
<comment type="similarity">
    <text evidence="1">Belongs to the SUA5 family. TsaC subfamily.</text>
</comment>
<reference key="1">
    <citation type="journal article" date="2006" name="PLoS Biol.">
        <title>The genome of deep-sea vent chemolithoautotroph Thiomicrospira crunogena XCL-2.</title>
        <authorList>
            <person name="Scott K.M."/>
            <person name="Sievert S.M."/>
            <person name="Abril F.N."/>
            <person name="Ball L.A."/>
            <person name="Barrett C.J."/>
            <person name="Blake R.A."/>
            <person name="Boller A.J."/>
            <person name="Chain P.S.G."/>
            <person name="Clark J.A."/>
            <person name="Davis C.R."/>
            <person name="Detter C."/>
            <person name="Do K.F."/>
            <person name="Dobrinski K.P."/>
            <person name="Faza B.I."/>
            <person name="Fitzpatrick K.A."/>
            <person name="Freyermuth S.K."/>
            <person name="Harmer T.L."/>
            <person name="Hauser L.J."/>
            <person name="Huegler M."/>
            <person name="Kerfeld C.A."/>
            <person name="Klotz M.G."/>
            <person name="Kong W.W."/>
            <person name="Land M."/>
            <person name="Lapidus A."/>
            <person name="Larimer F.W."/>
            <person name="Longo D.L."/>
            <person name="Lucas S."/>
            <person name="Malfatti S.A."/>
            <person name="Massey S.E."/>
            <person name="Martin D.D."/>
            <person name="McCuddin Z."/>
            <person name="Meyer F."/>
            <person name="Moore J.L."/>
            <person name="Ocampo L.H. Jr."/>
            <person name="Paul J.H."/>
            <person name="Paulsen I.T."/>
            <person name="Reep D.K."/>
            <person name="Ren Q."/>
            <person name="Ross R.L."/>
            <person name="Sato P.Y."/>
            <person name="Thomas P."/>
            <person name="Tinkham L.E."/>
            <person name="Zeruth G.T."/>
        </authorList>
    </citation>
    <scope>NUCLEOTIDE SEQUENCE [LARGE SCALE GENOMIC DNA]</scope>
    <source>
        <strain>DSM 25203 / XCL-2</strain>
    </source>
</reference>
<keyword id="KW-0067">ATP-binding</keyword>
<keyword id="KW-0963">Cytoplasm</keyword>
<keyword id="KW-0547">Nucleotide-binding</keyword>
<keyword id="KW-0548">Nucleotidyltransferase</keyword>
<keyword id="KW-0808">Transferase</keyword>
<keyword id="KW-0819">tRNA processing</keyword>
<evidence type="ECO:0000255" key="1">
    <source>
        <dbReference type="HAMAP-Rule" id="MF_01852"/>
    </source>
</evidence>
<accession>Q31JQ7</accession>
<organism>
    <name type="scientific">Hydrogenovibrio crunogenus (strain DSM 25203 / XCL-2)</name>
    <name type="common">Thiomicrospira crunogena</name>
    <dbReference type="NCBI Taxonomy" id="317025"/>
    <lineage>
        <taxon>Bacteria</taxon>
        <taxon>Pseudomonadati</taxon>
        <taxon>Pseudomonadota</taxon>
        <taxon>Gammaproteobacteria</taxon>
        <taxon>Thiotrichales</taxon>
        <taxon>Piscirickettsiaceae</taxon>
        <taxon>Hydrogenovibrio</taxon>
    </lineage>
</organism>
<dbReference type="EC" id="2.7.7.87" evidence="1"/>
<dbReference type="EMBL" id="CP000109">
    <property type="protein sequence ID" value="ABB40616.1"/>
    <property type="molecule type" value="Genomic_DNA"/>
</dbReference>
<dbReference type="SMR" id="Q31JQ7"/>
<dbReference type="STRING" id="317025.Tcr_0019"/>
<dbReference type="KEGG" id="tcx:Tcr_0019"/>
<dbReference type="eggNOG" id="COG0009">
    <property type="taxonomic scope" value="Bacteria"/>
</dbReference>
<dbReference type="HOGENOM" id="CLU_031397_6_0_6"/>
<dbReference type="OrthoDB" id="9814580at2"/>
<dbReference type="GO" id="GO:0005737">
    <property type="term" value="C:cytoplasm"/>
    <property type="evidence" value="ECO:0007669"/>
    <property type="project" value="UniProtKB-SubCell"/>
</dbReference>
<dbReference type="GO" id="GO:0005524">
    <property type="term" value="F:ATP binding"/>
    <property type="evidence" value="ECO:0007669"/>
    <property type="project" value="UniProtKB-UniRule"/>
</dbReference>
<dbReference type="GO" id="GO:0003725">
    <property type="term" value="F:double-stranded RNA binding"/>
    <property type="evidence" value="ECO:0007669"/>
    <property type="project" value="InterPro"/>
</dbReference>
<dbReference type="GO" id="GO:0061710">
    <property type="term" value="F:L-threonylcarbamoyladenylate synthase"/>
    <property type="evidence" value="ECO:0007669"/>
    <property type="project" value="UniProtKB-EC"/>
</dbReference>
<dbReference type="GO" id="GO:0000049">
    <property type="term" value="F:tRNA binding"/>
    <property type="evidence" value="ECO:0007669"/>
    <property type="project" value="TreeGrafter"/>
</dbReference>
<dbReference type="GO" id="GO:0006450">
    <property type="term" value="P:regulation of translational fidelity"/>
    <property type="evidence" value="ECO:0007669"/>
    <property type="project" value="TreeGrafter"/>
</dbReference>
<dbReference type="GO" id="GO:0002949">
    <property type="term" value="P:tRNA threonylcarbamoyladenosine modification"/>
    <property type="evidence" value="ECO:0007669"/>
    <property type="project" value="UniProtKB-UniRule"/>
</dbReference>
<dbReference type="Gene3D" id="3.90.870.10">
    <property type="entry name" value="DHBP synthase"/>
    <property type="match status" value="1"/>
</dbReference>
<dbReference type="HAMAP" id="MF_01852">
    <property type="entry name" value="TsaC"/>
    <property type="match status" value="1"/>
</dbReference>
<dbReference type="InterPro" id="IPR017945">
    <property type="entry name" value="DHBP_synth_RibB-like_a/b_dom"/>
</dbReference>
<dbReference type="InterPro" id="IPR006070">
    <property type="entry name" value="Sua5-like_dom"/>
</dbReference>
<dbReference type="InterPro" id="IPR023535">
    <property type="entry name" value="TC-AMP_synthase"/>
</dbReference>
<dbReference type="InterPro" id="IPR050156">
    <property type="entry name" value="TC-AMP_synthase_SUA5"/>
</dbReference>
<dbReference type="PANTHER" id="PTHR17490">
    <property type="entry name" value="SUA5"/>
    <property type="match status" value="1"/>
</dbReference>
<dbReference type="PANTHER" id="PTHR17490:SF18">
    <property type="entry name" value="THREONYLCARBAMOYL-AMP SYNTHASE"/>
    <property type="match status" value="1"/>
</dbReference>
<dbReference type="Pfam" id="PF01300">
    <property type="entry name" value="Sua5_yciO_yrdC"/>
    <property type="match status" value="1"/>
</dbReference>
<dbReference type="SUPFAM" id="SSF55821">
    <property type="entry name" value="YrdC/RibB"/>
    <property type="match status" value="1"/>
</dbReference>
<dbReference type="PROSITE" id="PS51163">
    <property type="entry name" value="YRDC"/>
    <property type="match status" value="1"/>
</dbReference>
<name>TSAC_HYDCU</name>
<sequence>MNCPLLTIKAAAKLITEGGVLAYPTEAVYGLGCDPLNKDAFQQLLRLKQRPLEKGVILIASSIAQIEPFVKLHNQAWTEKVLASWQVLNQPVTWVLPATDNVPEWITGGRNTVAVRVTQHPDVMALCNQLNFPIVSTSANLSGEDPVTTMEACCKAFPALAIMQGNLMGISAPSQIWEAQTQKRLR</sequence>